<keyword id="KW-0997">Cell inner membrane</keyword>
<keyword id="KW-1003">Cell membrane</keyword>
<keyword id="KW-0201">Cytochrome c-type biogenesis</keyword>
<keyword id="KW-0349">Heme</keyword>
<keyword id="KW-0408">Iron</keyword>
<keyword id="KW-0472">Membrane</keyword>
<keyword id="KW-0479">Metal-binding</keyword>
<keyword id="KW-0735">Signal-anchor</keyword>
<keyword id="KW-0812">Transmembrane</keyword>
<keyword id="KW-1133">Transmembrane helix</keyword>
<dbReference type="EMBL" id="CP001233">
    <property type="protein sequence ID" value="ACP06280.1"/>
    <property type="molecule type" value="Genomic_DNA"/>
</dbReference>
<dbReference type="RefSeq" id="WP_001069622.1">
    <property type="nucleotide sequence ID" value="NC_012578.1"/>
</dbReference>
<dbReference type="SMR" id="C3LP04"/>
<dbReference type="GeneID" id="89513959"/>
<dbReference type="KEGG" id="vcm:VCM66_1977"/>
<dbReference type="HOGENOM" id="CLU_079503_1_0_6"/>
<dbReference type="Proteomes" id="UP000001217">
    <property type="component" value="Chromosome I"/>
</dbReference>
<dbReference type="GO" id="GO:0005886">
    <property type="term" value="C:plasma membrane"/>
    <property type="evidence" value="ECO:0007669"/>
    <property type="project" value="UniProtKB-SubCell"/>
</dbReference>
<dbReference type="GO" id="GO:0020037">
    <property type="term" value="F:heme binding"/>
    <property type="evidence" value="ECO:0007669"/>
    <property type="project" value="InterPro"/>
</dbReference>
<dbReference type="GO" id="GO:0046872">
    <property type="term" value="F:metal ion binding"/>
    <property type="evidence" value="ECO:0007669"/>
    <property type="project" value="UniProtKB-KW"/>
</dbReference>
<dbReference type="GO" id="GO:0017004">
    <property type="term" value="P:cytochrome complex assembly"/>
    <property type="evidence" value="ECO:0007669"/>
    <property type="project" value="UniProtKB-KW"/>
</dbReference>
<dbReference type="FunFam" id="2.40.50.140:FF:000104">
    <property type="entry name" value="Cytochrome c-type biogenesis protein CcmE"/>
    <property type="match status" value="1"/>
</dbReference>
<dbReference type="Gene3D" id="2.40.50.140">
    <property type="entry name" value="Nucleic acid-binding proteins"/>
    <property type="match status" value="1"/>
</dbReference>
<dbReference type="HAMAP" id="MF_01959">
    <property type="entry name" value="CcmE"/>
    <property type="match status" value="1"/>
</dbReference>
<dbReference type="InterPro" id="IPR004329">
    <property type="entry name" value="CcmE"/>
</dbReference>
<dbReference type="InterPro" id="IPR036127">
    <property type="entry name" value="CcmE-like_sf"/>
</dbReference>
<dbReference type="InterPro" id="IPR012340">
    <property type="entry name" value="NA-bd_OB-fold"/>
</dbReference>
<dbReference type="NCBIfam" id="NF009638">
    <property type="entry name" value="PRK13165.1"/>
    <property type="match status" value="1"/>
</dbReference>
<dbReference type="NCBIfam" id="NF009727">
    <property type="entry name" value="PRK13254.1-1"/>
    <property type="match status" value="1"/>
</dbReference>
<dbReference type="NCBIfam" id="NF009729">
    <property type="entry name" value="PRK13254.1-3"/>
    <property type="match status" value="1"/>
</dbReference>
<dbReference type="PANTHER" id="PTHR34128">
    <property type="entry name" value="CYTOCHROME C-TYPE BIOGENESIS PROTEIN CCME HOMOLOG, MITOCHONDRIAL"/>
    <property type="match status" value="1"/>
</dbReference>
<dbReference type="PANTHER" id="PTHR34128:SF2">
    <property type="entry name" value="CYTOCHROME C-TYPE BIOGENESIS PROTEIN CCME HOMOLOG, MITOCHONDRIAL"/>
    <property type="match status" value="1"/>
</dbReference>
<dbReference type="Pfam" id="PF03100">
    <property type="entry name" value="CcmE"/>
    <property type="match status" value="1"/>
</dbReference>
<dbReference type="SUPFAM" id="SSF82093">
    <property type="entry name" value="Heme chaperone CcmE"/>
    <property type="match status" value="1"/>
</dbReference>
<feature type="chain" id="PRO_1000189056" description="Cytochrome c-type biogenesis protein CcmE">
    <location>
        <begin position="1"/>
        <end position="160"/>
    </location>
</feature>
<feature type="topological domain" description="Cytoplasmic" evidence="1">
    <location>
        <begin position="1"/>
        <end position="8"/>
    </location>
</feature>
<feature type="transmembrane region" description="Helical; Signal-anchor for type II membrane protein" evidence="1">
    <location>
        <begin position="9"/>
        <end position="29"/>
    </location>
</feature>
<feature type="topological domain" description="Periplasmic" evidence="1">
    <location>
        <begin position="30"/>
        <end position="160"/>
    </location>
</feature>
<feature type="binding site" description="covalent" evidence="1">
    <location>
        <position position="128"/>
    </location>
    <ligand>
        <name>heme</name>
        <dbReference type="ChEBI" id="CHEBI:30413"/>
    </ligand>
</feature>
<feature type="binding site" description="axial binding residue" evidence="1">
    <location>
        <position position="132"/>
    </location>
    <ligand>
        <name>heme</name>
        <dbReference type="ChEBI" id="CHEBI:30413"/>
    </ligand>
    <ligandPart>
        <name>Fe</name>
        <dbReference type="ChEBI" id="CHEBI:18248"/>
    </ligandPart>
</feature>
<gene>
    <name evidence="1" type="primary">ccmE</name>
    <name evidence="1" type="synonym">cycJ</name>
    <name type="ordered locus">VCM66_1977</name>
</gene>
<proteinExistence type="inferred from homology"/>
<sequence length="160" mass="17753">MNPRRKKRLGVVLAILFGLSATIGLIIYALNQNMDLFYTPTELVYGKEGKKPEIGQRLRIGGMVVEGSVKRDPNSLKVSFDLHDVGPSITVTYDGILPDLFREGQGIVAQGVLVEPTKIEAFEVLAKHDENYMPPEIAEAMKKTHAPLQYSQEQKQGSDQ</sequence>
<reference key="1">
    <citation type="journal article" date="2008" name="PLoS ONE">
        <title>A recalibrated molecular clock and independent origins for the cholera pandemic clones.</title>
        <authorList>
            <person name="Feng L."/>
            <person name="Reeves P.R."/>
            <person name="Lan R."/>
            <person name="Ren Y."/>
            <person name="Gao C."/>
            <person name="Zhou Z."/>
            <person name="Ren Y."/>
            <person name="Cheng J."/>
            <person name="Wang W."/>
            <person name="Wang J."/>
            <person name="Qian W."/>
            <person name="Li D."/>
            <person name="Wang L."/>
        </authorList>
    </citation>
    <scope>NUCLEOTIDE SEQUENCE [LARGE SCALE GENOMIC DNA]</scope>
    <source>
        <strain>M66-2</strain>
    </source>
</reference>
<protein>
    <recommendedName>
        <fullName evidence="1">Cytochrome c-type biogenesis protein CcmE</fullName>
    </recommendedName>
    <alternativeName>
        <fullName evidence="1">Cytochrome c maturation protein E</fullName>
    </alternativeName>
    <alternativeName>
        <fullName evidence="1">Heme chaperone CcmE</fullName>
    </alternativeName>
</protein>
<accession>C3LP04</accession>
<evidence type="ECO:0000255" key="1">
    <source>
        <dbReference type="HAMAP-Rule" id="MF_01959"/>
    </source>
</evidence>
<comment type="function">
    <text evidence="1">Heme chaperone required for the biogenesis of c-type cytochromes. Transiently binds heme delivered by CcmC and transfers the heme to apo-cytochromes in a process facilitated by CcmF and CcmH.</text>
</comment>
<comment type="subcellular location">
    <subcellularLocation>
        <location evidence="1">Cell inner membrane</location>
        <topology evidence="1">Single-pass type II membrane protein</topology>
        <orientation evidence="1">Periplasmic side</orientation>
    </subcellularLocation>
</comment>
<comment type="similarity">
    <text evidence="1">Belongs to the CcmE/CycJ family.</text>
</comment>
<organism>
    <name type="scientific">Vibrio cholerae serotype O1 (strain M66-2)</name>
    <dbReference type="NCBI Taxonomy" id="579112"/>
    <lineage>
        <taxon>Bacteria</taxon>
        <taxon>Pseudomonadati</taxon>
        <taxon>Pseudomonadota</taxon>
        <taxon>Gammaproteobacteria</taxon>
        <taxon>Vibrionales</taxon>
        <taxon>Vibrionaceae</taxon>
        <taxon>Vibrio</taxon>
    </lineage>
</organism>
<name>CCME_VIBCM</name>